<sequence length="212" mass="24312">MGTNKPVVIGIAGGSGSGKTSVTKAIFDHFKGHSILILEQDYYYKDQSHLPMEERLKTNYDHPLAFDNDLLIEHLQQLLAYKQVDKPVYDYTLHTRSEEIIPVEPKDVIILEGILILEDPRLCELMDIKLFVDTDADLRILRRMQRDIKERGRTMDSVIDQYVNVVRPMHNQFIEPSKKFADIIIPEGGQNHVAIDSMVTKIATILEQKVNL</sequence>
<keyword id="KW-0067">ATP-binding</keyword>
<keyword id="KW-0963">Cytoplasm</keyword>
<keyword id="KW-0418">Kinase</keyword>
<keyword id="KW-0547">Nucleotide-binding</keyword>
<keyword id="KW-0808">Transferase</keyword>
<name>URK_BACAA</name>
<feature type="chain" id="PRO_1000200503" description="Uridine kinase">
    <location>
        <begin position="1"/>
        <end position="212"/>
    </location>
</feature>
<feature type="binding site" evidence="1">
    <location>
        <begin position="13"/>
        <end position="20"/>
    </location>
    <ligand>
        <name>ATP</name>
        <dbReference type="ChEBI" id="CHEBI:30616"/>
    </ligand>
</feature>
<accession>C3P969</accession>
<gene>
    <name evidence="1" type="primary">udk</name>
    <name type="ordered locus">BAA_4628</name>
</gene>
<evidence type="ECO:0000255" key="1">
    <source>
        <dbReference type="HAMAP-Rule" id="MF_00551"/>
    </source>
</evidence>
<proteinExistence type="inferred from homology"/>
<dbReference type="EC" id="2.7.1.48" evidence="1"/>
<dbReference type="EMBL" id="CP001598">
    <property type="protein sequence ID" value="ACQ49652.1"/>
    <property type="molecule type" value="Genomic_DNA"/>
</dbReference>
<dbReference type="RefSeq" id="WP_000537086.1">
    <property type="nucleotide sequence ID" value="NC_012659.1"/>
</dbReference>
<dbReference type="SMR" id="C3P969"/>
<dbReference type="GeneID" id="45024253"/>
<dbReference type="KEGG" id="bai:BAA_4628"/>
<dbReference type="HOGENOM" id="CLU_021278_1_2_9"/>
<dbReference type="UniPathway" id="UPA00574">
    <property type="reaction ID" value="UER00637"/>
</dbReference>
<dbReference type="UniPathway" id="UPA00579">
    <property type="reaction ID" value="UER00640"/>
</dbReference>
<dbReference type="GO" id="GO:0005737">
    <property type="term" value="C:cytoplasm"/>
    <property type="evidence" value="ECO:0007669"/>
    <property type="project" value="UniProtKB-SubCell"/>
</dbReference>
<dbReference type="GO" id="GO:0005524">
    <property type="term" value="F:ATP binding"/>
    <property type="evidence" value="ECO:0007669"/>
    <property type="project" value="UniProtKB-UniRule"/>
</dbReference>
<dbReference type="GO" id="GO:0043771">
    <property type="term" value="F:cytidine kinase activity"/>
    <property type="evidence" value="ECO:0007669"/>
    <property type="project" value="RHEA"/>
</dbReference>
<dbReference type="GO" id="GO:0004849">
    <property type="term" value="F:uridine kinase activity"/>
    <property type="evidence" value="ECO:0007669"/>
    <property type="project" value="UniProtKB-UniRule"/>
</dbReference>
<dbReference type="GO" id="GO:0044211">
    <property type="term" value="P:CTP salvage"/>
    <property type="evidence" value="ECO:0007669"/>
    <property type="project" value="UniProtKB-UniRule"/>
</dbReference>
<dbReference type="GO" id="GO:0044206">
    <property type="term" value="P:UMP salvage"/>
    <property type="evidence" value="ECO:0007669"/>
    <property type="project" value="UniProtKB-UniRule"/>
</dbReference>
<dbReference type="CDD" id="cd02023">
    <property type="entry name" value="UMPK"/>
    <property type="match status" value="1"/>
</dbReference>
<dbReference type="Gene3D" id="3.40.50.300">
    <property type="entry name" value="P-loop containing nucleotide triphosphate hydrolases"/>
    <property type="match status" value="1"/>
</dbReference>
<dbReference type="HAMAP" id="MF_00551">
    <property type="entry name" value="Uridine_kinase"/>
    <property type="match status" value="1"/>
</dbReference>
<dbReference type="InterPro" id="IPR027417">
    <property type="entry name" value="P-loop_NTPase"/>
</dbReference>
<dbReference type="InterPro" id="IPR006083">
    <property type="entry name" value="PRK/URK"/>
</dbReference>
<dbReference type="InterPro" id="IPR026008">
    <property type="entry name" value="Uridine_kinase"/>
</dbReference>
<dbReference type="InterPro" id="IPR000764">
    <property type="entry name" value="Uridine_kinase-like"/>
</dbReference>
<dbReference type="NCBIfam" id="NF004018">
    <property type="entry name" value="PRK05480.1"/>
    <property type="match status" value="1"/>
</dbReference>
<dbReference type="NCBIfam" id="TIGR00235">
    <property type="entry name" value="udk"/>
    <property type="match status" value="1"/>
</dbReference>
<dbReference type="PANTHER" id="PTHR10285">
    <property type="entry name" value="URIDINE KINASE"/>
    <property type="match status" value="1"/>
</dbReference>
<dbReference type="Pfam" id="PF00485">
    <property type="entry name" value="PRK"/>
    <property type="match status" value="1"/>
</dbReference>
<dbReference type="PRINTS" id="PR00988">
    <property type="entry name" value="URIDINKINASE"/>
</dbReference>
<dbReference type="SUPFAM" id="SSF52540">
    <property type="entry name" value="P-loop containing nucleoside triphosphate hydrolases"/>
    <property type="match status" value="1"/>
</dbReference>
<comment type="catalytic activity">
    <reaction evidence="1">
        <text>uridine + ATP = UMP + ADP + H(+)</text>
        <dbReference type="Rhea" id="RHEA:16825"/>
        <dbReference type="ChEBI" id="CHEBI:15378"/>
        <dbReference type="ChEBI" id="CHEBI:16704"/>
        <dbReference type="ChEBI" id="CHEBI:30616"/>
        <dbReference type="ChEBI" id="CHEBI:57865"/>
        <dbReference type="ChEBI" id="CHEBI:456216"/>
        <dbReference type="EC" id="2.7.1.48"/>
    </reaction>
</comment>
<comment type="catalytic activity">
    <reaction evidence="1">
        <text>cytidine + ATP = CMP + ADP + H(+)</text>
        <dbReference type="Rhea" id="RHEA:24674"/>
        <dbReference type="ChEBI" id="CHEBI:15378"/>
        <dbReference type="ChEBI" id="CHEBI:17562"/>
        <dbReference type="ChEBI" id="CHEBI:30616"/>
        <dbReference type="ChEBI" id="CHEBI:60377"/>
        <dbReference type="ChEBI" id="CHEBI:456216"/>
        <dbReference type="EC" id="2.7.1.48"/>
    </reaction>
</comment>
<comment type="pathway">
    <text evidence="1">Pyrimidine metabolism; CTP biosynthesis via salvage pathway; CTP from cytidine: step 1/3.</text>
</comment>
<comment type="pathway">
    <text evidence="1">Pyrimidine metabolism; UMP biosynthesis via salvage pathway; UMP from uridine: step 1/1.</text>
</comment>
<comment type="subcellular location">
    <subcellularLocation>
        <location evidence="1">Cytoplasm</location>
    </subcellularLocation>
</comment>
<comment type="similarity">
    <text evidence="1">Belongs to the uridine kinase family.</text>
</comment>
<organism>
    <name type="scientific">Bacillus anthracis (strain A0248)</name>
    <dbReference type="NCBI Taxonomy" id="592021"/>
    <lineage>
        <taxon>Bacteria</taxon>
        <taxon>Bacillati</taxon>
        <taxon>Bacillota</taxon>
        <taxon>Bacilli</taxon>
        <taxon>Bacillales</taxon>
        <taxon>Bacillaceae</taxon>
        <taxon>Bacillus</taxon>
        <taxon>Bacillus cereus group</taxon>
    </lineage>
</organism>
<protein>
    <recommendedName>
        <fullName evidence="1">Uridine kinase</fullName>
        <ecNumber evidence="1">2.7.1.48</ecNumber>
    </recommendedName>
    <alternativeName>
        <fullName evidence="1">Cytidine monophosphokinase</fullName>
    </alternativeName>
    <alternativeName>
        <fullName evidence="1">Uridine monophosphokinase</fullName>
    </alternativeName>
</protein>
<reference key="1">
    <citation type="submission" date="2009-04" db="EMBL/GenBank/DDBJ databases">
        <title>Genome sequence of Bacillus anthracis A0248.</title>
        <authorList>
            <person name="Dodson R.J."/>
            <person name="Munk A.C."/>
            <person name="Bruce D."/>
            <person name="Detter C."/>
            <person name="Tapia R."/>
            <person name="Sutton G."/>
            <person name="Sims D."/>
            <person name="Brettin T."/>
        </authorList>
    </citation>
    <scope>NUCLEOTIDE SEQUENCE [LARGE SCALE GENOMIC DNA]</scope>
    <source>
        <strain>A0248</strain>
    </source>
</reference>